<evidence type="ECO:0000250" key="1">
    <source>
        <dbReference type="UniProtKB" id="O04385"/>
    </source>
</evidence>
<evidence type="ECO:0000255" key="2">
    <source>
        <dbReference type="PROSITE-ProRule" id="PRU01020"/>
    </source>
</evidence>
<evidence type="ECO:0000256" key="3">
    <source>
        <dbReference type="SAM" id="MobiDB-lite"/>
    </source>
</evidence>
<evidence type="ECO:0000269" key="4">
    <source>
    </source>
</evidence>
<evidence type="ECO:0000303" key="5">
    <source>
    </source>
</evidence>
<evidence type="ECO:0000305" key="6">
    <source>
    </source>
</evidence>
<feature type="chain" id="PRO_0000446608" description="O-methyltransferase lcsG">
    <location>
        <begin position="1"/>
        <end position="468"/>
    </location>
</feature>
<feature type="region of interest" description="Disordered" evidence="3">
    <location>
        <begin position="1"/>
        <end position="29"/>
    </location>
</feature>
<feature type="compositionally biased region" description="Polar residues" evidence="3">
    <location>
        <begin position="1"/>
        <end position="12"/>
    </location>
</feature>
<feature type="binding site" evidence="1">
    <location>
        <begin position="298"/>
        <end position="299"/>
    </location>
    <ligand>
        <name>S-adenosyl-L-methionine</name>
        <dbReference type="ChEBI" id="CHEBI:59789"/>
    </ligand>
</feature>
<feature type="binding site" evidence="2">
    <location>
        <position position="321"/>
    </location>
    <ligand>
        <name>S-adenosyl-L-methionine</name>
        <dbReference type="ChEBI" id="CHEBI:59789"/>
    </ligand>
</feature>
<feature type="binding site" evidence="1">
    <location>
        <begin position="348"/>
        <end position="349"/>
    </location>
    <ligand>
        <name>S-adenosyl-L-methionine</name>
        <dbReference type="ChEBI" id="CHEBI:59789"/>
    </ligand>
</feature>
<feature type="binding site" evidence="1">
    <location>
        <position position="363"/>
    </location>
    <ligand>
        <name>S-adenosyl-L-methionine</name>
        <dbReference type="ChEBI" id="CHEBI:59789"/>
    </ligand>
</feature>
<proteinExistence type="evidence at transcript level"/>
<comment type="function">
    <text evidence="4 6">O-methyltransferase; part of the gene cluster that mediates the biosynthesis of the lipopeptide antibiotics leucinostatins that show extensive biological activities, including antimalarial, antiviral, antibacterial, antifungal, and antitumor activities, as well as phytotoxic (PubMed:27416025). Leucinostatin A contains nine amino acid residues, including the unusual amino acid 4-methyl-L-proline (MePro), 2-amino-6-hydroxy-4-methyl-8-oxodecanoic acid (AHyMeOA), 3-hydroxyleucine (HyLeu), alpha-aminoisobutyric acid (AIB), beta-Ala, a 4-methylhex-2-enoic acid at the N-terminus as well as a N1,N1-dimethylpropane-1,2-diamine (DPD) at the C-terminus (Probable). The biosynthesis of leucinostatins is probably initiated with the assembly of 4-methylhex-2-enoic acid by a reducing PKS. Two reducing polyketide synthases, lcsB and lcsC, have been identified in the cluster and it is not clear which is the one that assembles 4-methylhex-2-enoic acid since both contain KS, AT, DH, cMT, ER, KR and ACP domains (Probable). The polyketide residue might be transferred to the NRPS lcsA, mediated by two additional enzymes, the acyl-CoA ligase lcsD and the thioesterase lcsE. The linear polyketide carboxylic acid, which is released from PKS, is converted to a CoA thioester by lcsD, and then lcsE hydrolyzes the thiol bond and shuttles the polyketide intermediate to lcsA (Probable). The C domain of the first module catalyzed the condensation of 4-methylhex-2-enoic acid and MePro carried by domain A1, followed by successive condensations of nine amino acids to trigger the elongation of the linear peptide. A5 and A6 domains of lcsA are proposed to incorporate leucine, A2 AHyMeOA, and A3 incorporates HyLeu. A4, A7 and A8 incorporate AIB (Probable). The AHyMeOA in leucinostatin A activated by the A2 might be produced by the second PKS (lcsB or lcsC) present within the cluster (Probable). The MePro is probably produced via leucine cyclization and may originate from a separate pathway, independent of the cluster. Another nonproteinogenic amino acid, beta-Ala, could be produced by an aspartic acid decarboxylase also localized outside of the cluster. Two candidates are VFPBJ_01400 and VFPBJ_10476 (Probable). The final peptide scaffold may be released by the NAD(P)H-dependent thioester reductase (TE) at the C-terminal region of lcsA (Probable). Transamination of the lcsA product by the transaminase lcsP may produce DPD at the C-terminus (Probable). Further hydroxylation steps performed alternatively by the cytochrome P450 monooxygenases lcsI, lcsK and lcsN then yield the non-methylated leucinostatins precursor. It is also possible that leucines can be hydroxylated prior to their incorporation into the peptide (Probable). Varying extents of methylation then lead to the formation of leucinostatins A and B (Probable).</text>
</comment>
<comment type="pathway">
    <text evidence="6">Secondary metabolite biosynthesis.</text>
</comment>
<comment type="induction">
    <text evidence="4">Expression is positively regulated by the leucinostatins biosynthesis cluster-specific transcription regulator lcsF.</text>
</comment>
<comment type="similarity">
    <text evidence="2">Belongs to the class I-like SAM-binding methyltransferase superfamily. Cation-independent O-methyltransferase family.</text>
</comment>
<organism>
    <name type="scientific">Purpureocillium lilacinum</name>
    <name type="common">Paecilomyces lilacinus</name>
    <dbReference type="NCBI Taxonomy" id="33203"/>
    <lineage>
        <taxon>Eukaryota</taxon>
        <taxon>Fungi</taxon>
        <taxon>Dikarya</taxon>
        <taxon>Ascomycota</taxon>
        <taxon>Pezizomycotina</taxon>
        <taxon>Sordariomycetes</taxon>
        <taxon>Hypocreomycetidae</taxon>
        <taxon>Hypocreales</taxon>
        <taxon>Ophiocordycipitaceae</taxon>
        <taxon>Purpureocillium</taxon>
    </lineage>
</organism>
<keyword id="KW-0489">Methyltransferase</keyword>
<keyword id="KW-0949">S-adenosyl-L-methionine</keyword>
<keyword id="KW-0808">Transferase</keyword>
<gene>
    <name evidence="5" type="primary">lcsG</name>
    <name type="ORF">VFPBJ_02521</name>
</gene>
<name>LCSG_PURLI</name>
<sequence>MGDNVQSDTTAAQAGITDAPTAPTSAPVSLKERLEKLIESSQQLIKRMDENNIPDPTFAPECQEDYSKLPPETITERFALLDLLNDVTFLVHGASQSITDVAQNAMADSATLNILNYFNFWDVIPLDGDASFAEIAKAVRLPQEAVEAILPYAFSNRIFEPVTIGDPNSRIRHTSRSAAMIKDPTLRIIVNLTIDGLAGPLSILNRALEKNFLGKEKLTNEISETPFGMLYNKGGPLGEYKDYYDWLDRDGEGERKGWRQRDMVESLRLAKEKMGAESALLEALDWAGAGKATVVDLGGSGGHDDVPLAEKFPDLKIIVQDLPSCQPKFDDGYISDELKKRVSFLAHDFFTPQPVQADIYLFKWVFYDWSNKDIVKIIKALVPALRPGARVLVLDLMVDVGPEAAAVMPRSLLKYSNVISLKTLSLFGHTKQATKKMTDLFKAADDRFEIVRDEVAGTFMTFEAVWRG</sequence>
<accession>A0A179H2P2</accession>
<protein>
    <recommendedName>
        <fullName evidence="5">O-methyltransferase lcsG</fullName>
        <ecNumber evidence="2">2.1.1.-</ecNumber>
    </recommendedName>
    <alternativeName>
        <fullName evidence="5">Leucinostatins biosynthesis cluster protein G</fullName>
    </alternativeName>
</protein>
<reference key="1">
    <citation type="journal article" date="2016" name="PLoS Pathog.">
        <title>Biosynthesis of antibiotic leucinostatins in bio-control fungus Purpureocillium lilacinum and their inhibition on phytophthora revealed by genome mining.</title>
        <authorList>
            <person name="Wang G."/>
            <person name="Liu Z."/>
            <person name="Lin R."/>
            <person name="Li E."/>
            <person name="Mao Z."/>
            <person name="Ling J."/>
            <person name="Yang Y."/>
            <person name="Yin W.B."/>
            <person name="Xie B."/>
        </authorList>
    </citation>
    <scope>NUCLEOTIDE SEQUENCE [LARGE SCALE GENOMIC DNA]</scope>
    <scope>IDENTIFICATION</scope>
    <scope>FUNCTION</scope>
    <scope>INDUCTION</scope>
    <scope>PATHWAY</scope>
    <source>
        <strain>PLBJ-1</strain>
    </source>
</reference>
<dbReference type="EC" id="2.1.1.-" evidence="2"/>
<dbReference type="EMBL" id="LSBH01000002">
    <property type="protein sequence ID" value="OAQ83753.1"/>
    <property type="molecule type" value="Genomic_DNA"/>
</dbReference>
<dbReference type="SMR" id="A0A179H2P2"/>
<dbReference type="Proteomes" id="UP000078240">
    <property type="component" value="Unassembled WGS sequence"/>
</dbReference>
<dbReference type="GO" id="GO:0008171">
    <property type="term" value="F:O-methyltransferase activity"/>
    <property type="evidence" value="ECO:0007669"/>
    <property type="project" value="InterPro"/>
</dbReference>
<dbReference type="GO" id="GO:0032259">
    <property type="term" value="P:methylation"/>
    <property type="evidence" value="ECO:0007669"/>
    <property type="project" value="UniProtKB-KW"/>
</dbReference>
<dbReference type="GO" id="GO:0044550">
    <property type="term" value="P:secondary metabolite biosynthetic process"/>
    <property type="evidence" value="ECO:0007669"/>
    <property type="project" value="UniProtKB-ARBA"/>
</dbReference>
<dbReference type="Gene3D" id="3.40.50.150">
    <property type="entry name" value="Vaccinia Virus protein VP39"/>
    <property type="match status" value="1"/>
</dbReference>
<dbReference type="InterPro" id="IPR016461">
    <property type="entry name" value="COMT-like"/>
</dbReference>
<dbReference type="InterPro" id="IPR001077">
    <property type="entry name" value="O_MeTrfase_dom"/>
</dbReference>
<dbReference type="InterPro" id="IPR029063">
    <property type="entry name" value="SAM-dependent_MTases_sf"/>
</dbReference>
<dbReference type="PANTHER" id="PTHR43712">
    <property type="entry name" value="PUTATIVE (AFU_ORTHOLOGUE AFUA_4G14580)-RELATED"/>
    <property type="match status" value="1"/>
</dbReference>
<dbReference type="PANTHER" id="PTHR43712:SF12">
    <property type="entry name" value="STERIGMATOCYSTIN 8-O-METHYLTRANSFERASE"/>
    <property type="match status" value="1"/>
</dbReference>
<dbReference type="Pfam" id="PF00891">
    <property type="entry name" value="Methyltransf_2"/>
    <property type="match status" value="1"/>
</dbReference>
<dbReference type="SUPFAM" id="SSF53335">
    <property type="entry name" value="S-adenosyl-L-methionine-dependent methyltransferases"/>
    <property type="match status" value="1"/>
</dbReference>
<dbReference type="PROSITE" id="PS51683">
    <property type="entry name" value="SAM_OMT_II"/>
    <property type="match status" value="1"/>
</dbReference>